<protein>
    <recommendedName>
        <fullName>Cytochrome c oxidase subunit 3</fullName>
        <ecNumber>7.1.1.9</ecNumber>
    </recommendedName>
    <alternativeName>
        <fullName>Cytochrome c oxidase polypeptide III</fullName>
    </alternativeName>
</protein>
<sequence length="261" mass="29854">MTHQTHAYHMVNPSPWPLTGALSALLMTSGLIMWFHFNSVALLMLGLTTNMLTMYQWWRDVIRESTFQGHHTPNVQKGLRYGMILFIISEVLFFTGFFWAFYHSSLAPTPELGGCWPPTGIHPLNPLEVPLLNTSVLLASGVSITWAHHSLMEGNRNHMLQALFITIALGVYFTLLQASEYYEAPFTISDGVYGSTFFVATGFHGLHVIIGSTFLIVCFFRQLKFHFTSSHHFGFEAAAWYWHFVDVVWLFLYVSIYWWGS</sequence>
<accession>P68089</accession>
<accession>O47703</accession>
<accession>O47704</accession>
<comment type="function">
    <text evidence="2">Component of the cytochrome c oxidase, the last enzyme in the mitochondrial electron transport chain which drives oxidative phosphorylation. The respiratory chain contains 3 multisubunit complexes succinate dehydrogenase (complex II, CII), ubiquinol-cytochrome c oxidoreductase (cytochrome b-c1 complex, complex III, CIII) and cytochrome c oxidase (complex IV, CIV), that cooperate to transfer electrons derived from NADH and succinate to molecular oxygen, creating an electrochemical gradient over the inner membrane that drives transmembrane transport and the ATP synthase. Cytochrome c oxidase is the component of the respiratory chain that catalyzes the reduction of oxygen to water. Electrons originating from reduced cytochrome c in the intermembrane space (IMS) are transferred via the dinuclear copper A center (CU(A)) of subunit 2 and heme A of subunit 1 to the active site in subunit 1, a binuclear center (BNC) formed by heme A3 and copper B (CU(B)). The BNC reduces molecular oxygen to 2 water molecules using 4 electrons from cytochrome c in the IMS and 4 protons from the mitochondrial matrix.</text>
</comment>
<comment type="catalytic activity">
    <reaction evidence="2">
        <text>4 Fe(II)-[cytochrome c] + O2 + 8 H(+)(in) = 4 Fe(III)-[cytochrome c] + 2 H2O + 4 H(+)(out)</text>
        <dbReference type="Rhea" id="RHEA:11436"/>
        <dbReference type="Rhea" id="RHEA-COMP:10350"/>
        <dbReference type="Rhea" id="RHEA-COMP:14399"/>
        <dbReference type="ChEBI" id="CHEBI:15377"/>
        <dbReference type="ChEBI" id="CHEBI:15378"/>
        <dbReference type="ChEBI" id="CHEBI:15379"/>
        <dbReference type="ChEBI" id="CHEBI:29033"/>
        <dbReference type="ChEBI" id="CHEBI:29034"/>
        <dbReference type="EC" id="7.1.1.9"/>
    </reaction>
    <physiologicalReaction direction="left-to-right" evidence="2">
        <dbReference type="Rhea" id="RHEA:11437"/>
    </physiologicalReaction>
</comment>
<comment type="subunit">
    <text evidence="1">Component of the cytochrome c oxidase (complex IV, CIV), a multisubunit enzyme composed of 14 subunits. The complex is composed of a catalytic core of 3 subunits MT-CO1, MT-CO2 and MT-CO3, encoded in the mitochondrial DNA, and 11 supernumerary subunits COX4I, COX5A, COX5B, COX6A, COX6B, COX6C, COX7A, COX7B, COX7C, COX8 and NDUFA4, which are encoded in the nuclear genome. The complex exists as a monomer or a dimer and forms supercomplexes (SCs) in the inner mitochondrial membrane with NADH-ubiquinone oxidoreductase (complex I, CI) and ubiquinol-cytochrome c oxidoreductase (cytochrome b-c1 complex, complex III, CIII), resulting in different assemblies (supercomplex SCI(1)III(2)IV(1) and megacomplex MCI(2)III(2)IV(2)).</text>
</comment>
<comment type="subcellular location">
    <subcellularLocation>
        <location evidence="1">Mitochondrion inner membrane</location>
        <topology evidence="1">Multi-pass membrane protein</topology>
    </subcellularLocation>
</comment>
<comment type="similarity">
    <text evidence="3">Belongs to the cytochrome c oxidase subunit 3 family.</text>
</comment>
<proteinExistence type="inferred from homology"/>
<name>COX3_NANSO</name>
<feature type="chain" id="PRO_0000183784" description="Cytochrome c oxidase subunit 3">
    <location>
        <begin position="1"/>
        <end position="261"/>
    </location>
</feature>
<feature type="topological domain" description="Mitochondrial matrix" evidence="1">
    <location>
        <begin position="1"/>
        <end position="15"/>
    </location>
</feature>
<feature type="transmembrane region" description="Helical; Name=I" evidence="1">
    <location>
        <begin position="16"/>
        <end position="34"/>
    </location>
</feature>
<feature type="topological domain" description="Mitochondrial intermembrane" evidence="1">
    <location>
        <begin position="35"/>
        <end position="40"/>
    </location>
</feature>
<feature type="transmembrane region" description="Helical; Name=II" evidence="1">
    <location>
        <begin position="41"/>
        <end position="66"/>
    </location>
</feature>
<feature type="topological domain" description="Mitochondrial matrix" evidence="1">
    <location>
        <begin position="67"/>
        <end position="72"/>
    </location>
</feature>
<feature type="transmembrane region" description="Helical; Name=III" evidence="1">
    <location>
        <begin position="73"/>
        <end position="105"/>
    </location>
</feature>
<feature type="topological domain" description="Mitochondrial intermembrane" evidence="1">
    <location>
        <begin position="106"/>
        <end position="128"/>
    </location>
</feature>
<feature type="transmembrane region" description="Helical; Name=IV" evidence="1">
    <location>
        <begin position="129"/>
        <end position="152"/>
    </location>
</feature>
<feature type="topological domain" description="Mitochondrial matrix" evidence="1">
    <location>
        <begin position="153"/>
        <end position="155"/>
    </location>
</feature>
<feature type="transmembrane region" description="Helical; Name=V" evidence="1">
    <location>
        <begin position="156"/>
        <end position="183"/>
    </location>
</feature>
<feature type="topological domain" description="Mitochondrial intermembrane" evidence="1">
    <location>
        <begin position="184"/>
        <end position="190"/>
    </location>
</feature>
<feature type="transmembrane region" description="Helical; Name=VI" evidence="1">
    <location>
        <begin position="191"/>
        <end position="223"/>
    </location>
</feature>
<feature type="topological domain" description="Mitochondrial matrix" evidence="1">
    <location>
        <begin position="224"/>
        <end position="232"/>
    </location>
</feature>
<feature type="transmembrane region" description="Helical; Name=VII" evidence="1">
    <location>
        <begin position="233"/>
        <end position="256"/>
    </location>
</feature>
<feature type="topological domain" description="Mitochondrial intermembrane" evidence="1">
    <location>
        <begin position="257"/>
        <end position="261"/>
    </location>
</feature>
<evidence type="ECO:0000250" key="1">
    <source>
        <dbReference type="UniProtKB" id="P00415"/>
    </source>
</evidence>
<evidence type="ECO:0000250" key="2">
    <source>
        <dbReference type="UniProtKB" id="P00420"/>
    </source>
</evidence>
<evidence type="ECO:0000305" key="3"/>
<gene>
    <name type="primary">MT-CO3</name>
    <name type="synonym">COIII</name>
    <name type="synonym">COXIII</name>
    <name type="synonym">MTCO3</name>
</gene>
<keyword id="KW-0472">Membrane</keyword>
<keyword id="KW-0496">Mitochondrion</keyword>
<keyword id="KW-0999">Mitochondrion inner membrane</keyword>
<keyword id="KW-1278">Translocase</keyword>
<keyword id="KW-0812">Transmembrane</keyword>
<keyword id="KW-1133">Transmembrane helix</keyword>
<reference key="1">
    <citation type="journal article" date="1999" name="Mol. Phylogenet. Evol.">
        <title>Phylogenetic relationships in the bovid subfamily Antilopinae based on mitochondrial DNA sequences.</title>
        <authorList>
            <person name="Rebholz W.E.R."/>
            <person name="Harley E.H."/>
        </authorList>
    </citation>
    <scope>NUCLEOTIDE SEQUENCE [GENOMIC DNA]</scope>
</reference>
<geneLocation type="mitochondrion"/>
<dbReference type="EC" id="7.1.1.9"/>
<dbReference type="EMBL" id="AF030471">
    <property type="protein sequence ID" value="AAB93610.1"/>
    <property type="molecule type" value="Genomic_DNA"/>
</dbReference>
<dbReference type="SMR" id="P68089"/>
<dbReference type="CTD" id="4514"/>
<dbReference type="GO" id="GO:0005743">
    <property type="term" value="C:mitochondrial inner membrane"/>
    <property type="evidence" value="ECO:0007669"/>
    <property type="project" value="UniProtKB-SubCell"/>
</dbReference>
<dbReference type="GO" id="GO:0045277">
    <property type="term" value="C:respiratory chain complex IV"/>
    <property type="evidence" value="ECO:0000250"/>
    <property type="project" value="UniProtKB"/>
</dbReference>
<dbReference type="GO" id="GO:0004129">
    <property type="term" value="F:cytochrome-c oxidase activity"/>
    <property type="evidence" value="ECO:0007669"/>
    <property type="project" value="UniProtKB-EC"/>
</dbReference>
<dbReference type="GO" id="GO:0006123">
    <property type="term" value="P:mitochondrial electron transport, cytochrome c to oxygen"/>
    <property type="evidence" value="ECO:0007669"/>
    <property type="project" value="TreeGrafter"/>
</dbReference>
<dbReference type="GO" id="GO:0008535">
    <property type="term" value="P:respiratory chain complex IV assembly"/>
    <property type="evidence" value="ECO:0000250"/>
    <property type="project" value="UniProtKB"/>
</dbReference>
<dbReference type="CDD" id="cd01665">
    <property type="entry name" value="Cyt_c_Oxidase_III"/>
    <property type="match status" value="1"/>
</dbReference>
<dbReference type="FunFam" id="1.10.287.70:FF:000048">
    <property type="entry name" value="Cytochrome c oxidase subunit 3"/>
    <property type="match status" value="1"/>
</dbReference>
<dbReference type="FunFam" id="1.20.120.80:FF:000002">
    <property type="entry name" value="Cytochrome c oxidase subunit 3"/>
    <property type="match status" value="1"/>
</dbReference>
<dbReference type="Gene3D" id="1.10.287.70">
    <property type="match status" value="1"/>
</dbReference>
<dbReference type="Gene3D" id="1.20.120.80">
    <property type="entry name" value="Cytochrome c oxidase, subunit III, four-helix bundle"/>
    <property type="match status" value="1"/>
</dbReference>
<dbReference type="InterPro" id="IPR024791">
    <property type="entry name" value="Cyt_c/ubiquinol_Oxase_su3"/>
</dbReference>
<dbReference type="InterPro" id="IPR033945">
    <property type="entry name" value="Cyt_c_oxase_su3_dom"/>
</dbReference>
<dbReference type="InterPro" id="IPR000298">
    <property type="entry name" value="Cyt_c_oxidase-like_su3"/>
</dbReference>
<dbReference type="InterPro" id="IPR035973">
    <property type="entry name" value="Cyt_c_oxidase_su3-like_sf"/>
</dbReference>
<dbReference type="InterPro" id="IPR013833">
    <property type="entry name" value="Cyt_c_oxidase_su3_a-hlx"/>
</dbReference>
<dbReference type="PANTHER" id="PTHR11403:SF7">
    <property type="entry name" value="CYTOCHROME C OXIDASE SUBUNIT 3"/>
    <property type="match status" value="1"/>
</dbReference>
<dbReference type="PANTHER" id="PTHR11403">
    <property type="entry name" value="CYTOCHROME C OXIDASE SUBUNIT III"/>
    <property type="match status" value="1"/>
</dbReference>
<dbReference type="Pfam" id="PF00510">
    <property type="entry name" value="COX3"/>
    <property type="match status" value="1"/>
</dbReference>
<dbReference type="SUPFAM" id="SSF81452">
    <property type="entry name" value="Cytochrome c oxidase subunit III-like"/>
    <property type="match status" value="1"/>
</dbReference>
<dbReference type="PROSITE" id="PS50253">
    <property type="entry name" value="COX3"/>
    <property type="match status" value="1"/>
</dbReference>
<organism>
    <name type="scientific">Nanger soemmerringii</name>
    <name type="common">Soemmerring's gazelle</name>
    <name type="synonym">Gazella soemmerringii</name>
    <dbReference type="NCBI Taxonomy" id="69306"/>
    <lineage>
        <taxon>Eukaryota</taxon>
        <taxon>Metazoa</taxon>
        <taxon>Chordata</taxon>
        <taxon>Craniata</taxon>
        <taxon>Vertebrata</taxon>
        <taxon>Euteleostomi</taxon>
        <taxon>Mammalia</taxon>
        <taxon>Eutheria</taxon>
        <taxon>Laurasiatheria</taxon>
        <taxon>Artiodactyla</taxon>
        <taxon>Ruminantia</taxon>
        <taxon>Pecora</taxon>
        <taxon>Bovidae</taxon>
        <taxon>Antilopinae</taxon>
        <taxon>Nanger</taxon>
    </lineage>
</organism>